<comment type="function">
    <text evidence="1">Catalyzes the condensation reaction of fatty acid synthesis by the addition to an acyl acceptor of two carbons from malonyl-ACP. Catalyzes the first condensation reaction which initiates fatty acid synthesis and may therefore play a role in governing the total rate of fatty acid production. Possesses both acetoacetyl-ACP synthase and acetyl transacylase activities. Its substrate specificity determines the biosynthesis of branched-chain and/or straight-chain of fatty acids.</text>
</comment>
<comment type="catalytic activity">
    <reaction evidence="1">
        <text>malonyl-[ACP] + acetyl-CoA + H(+) = 3-oxobutanoyl-[ACP] + CO2 + CoA</text>
        <dbReference type="Rhea" id="RHEA:12080"/>
        <dbReference type="Rhea" id="RHEA-COMP:9623"/>
        <dbReference type="Rhea" id="RHEA-COMP:9625"/>
        <dbReference type="ChEBI" id="CHEBI:15378"/>
        <dbReference type="ChEBI" id="CHEBI:16526"/>
        <dbReference type="ChEBI" id="CHEBI:57287"/>
        <dbReference type="ChEBI" id="CHEBI:57288"/>
        <dbReference type="ChEBI" id="CHEBI:78449"/>
        <dbReference type="ChEBI" id="CHEBI:78450"/>
        <dbReference type="EC" id="2.3.1.180"/>
    </reaction>
</comment>
<comment type="pathway">
    <text evidence="1">Lipid metabolism; fatty acid biosynthesis.</text>
</comment>
<comment type="subunit">
    <text evidence="1">Homodimer.</text>
</comment>
<comment type="subcellular location">
    <subcellularLocation>
        <location evidence="1">Cytoplasm</location>
    </subcellularLocation>
</comment>
<comment type="domain">
    <text evidence="1">The last Arg residue of the ACP-binding site is essential for the weak association between ACP/AcpP and FabH.</text>
</comment>
<comment type="similarity">
    <text evidence="1">Belongs to the thiolase-like superfamily. FabH family.</text>
</comment>
<evidence type="ECO:0000255" key="1">
    <source>
        <dbReference type="HAMAP-Rule" id="MF_01815"/>
    </source>
</evidence>
<keyword id="KW-0012">Acyltransferase</keyword>
<keyword id="KW-0963">Cytoplasm</keyword>
<keyword id="KW-0275">Fatty acid biosynthesis</keyword>
<keyword id="KW-0276">Fatty acid metabolism</keyword>
<keyword id="KW-0444">Lipid biosynthesis</keyword>
<keyword id="KW-0443">Lipid metabolism</keyword>
<keyword id="KW-0511">Multifunctional enzyme</keyword>
<keyword id="KW-1185">Reference proteome</keyword>
<keyword id="KW-0808">Transferase</keyword>
<reference key="1">
    <citation type="journal article" date="2006" name="Proc. Natl. Acad. Sci. U.S.A.">
        <title>Comparative genomics of the lactic acid bacteria.</title>
        <authorList>
            <person name="Makarova K.S."/>
            <person name="Slesarev A."/>
            <person name="Wolf Y.I."/>
            <person name="Sorokin A."/>
            <person name="Mirkin B."/>
            <person name="Koonin E.V."/>
            <person name="Pavlov A."/>
            <person name="Pavlova N."/>
            <person name="Karamychev V."/>
            <person name="Polouchine N."/>
            <person name="Shakhova V."/>
            <person name="Grigoriev I."/>
            <person name="Lou Y."/>
            <person name="Rohksar D."/>
            <person name="Lucas S."/>
            <person name="Huang K."/>
            <person name="Goodstein D.M."/>
            <person name="Hawkins T."/>
            <person name="Plengvidhya V."/>
            <person name="Welker D."/>
            <person name="Hughes J."/>
            <person name="Goh Y."/>
            <person name="Benson A."/>
            <person name="Baldwin K."/>
            <person name="Lee J.-H."/>
            <person name="Diaz-Muniz I."/>
            <person name="Dosti B."/>
            <person name="Smeianov V."/>
            <person name="Wechter W."/>
            <person name="Barabote R."/>
            <person name="Lorca G."/>
            <person name="Altermann E."/>
            <person name="Barrangou R."/>
            <person name="Ganesan B."/>
            <person name="Xie Y."/>
            <person name="Rawsthorne H."/>
            <person name="Tamir D."/>
            <person name="Parker C."/>
            <person name="Breidt F."/>
            <person name="Broadbent J.R."/>
            <person name="Hutkins R."/>
            <person name="O'Sullivan D."/>
            <person name="Steele J."/>
            <person name="Unlu G."/>
            <person name="Saier M.H. Jr."/>
            <person name="Klaenhammer T."/>
            <person name="Richardson P."/>
            <person name="Kozyavkin S."/>
            <person name="Weimer B.C."/>
            <person name="Mills D.A."/>
        </authorList>
    </citation>
    <scope>NUCLEOTIDE SEQUENCE [LARGE SCALE GENOMIC DNA]</scope>
    <source>
        <strain>ATCC 367 / BCRC 12310 / CIP 105137 / JCM 1170 / LMG 11437 / NCIMB 947 / NCTC 947</strain>
    </source>
</reference>
<protein>
    <recommendedName>
        <fullName evidence="1">Beta-ketoacyl-[acyl-carrier-protein] synthase III</fullName>
        <shortName evidence="1">Beta-ketoacyl-ACP synthase III</shortName>
        <shortName evidence="1">KAS III</shortName>
        <ecNumber evidence="1">2.3.1.180</ecNumber>
    </recommendedName>
    <alternativeName>
        <fullName evidence="1">3-oxoacyl-[acyl-carrier-protein] synthase 3</fullName>
    </alternativeName>
    <alternativeName>
        <fullName evidence="1">3-oxoacyl-[acyl-carrier-protein] synthase III</fullName>
    </alternativeName>
</protein>
<gene>
    <name evidence="1" type="primary">fabH</name>
    <name type="ordered locus">LVIS_0935</name>
</gene>
<dbReference type="EC" id="2.3.1.180" evidence="1"/>
<dbReference type="EMBL" id="CP000416">
    <property type="protein sequence ID" value="ABJ64070.1"/>
    <property type="molecule type" value="Genomic_DNA"/>
</dbReference>
<dbReference type="RefSeq" id="WP_011667660.1">
    <property type="nucleotide sequence ID" value="NC_008497.1"/>
</dbReference>
<dbReference type="SMR" id="Q03RV2"/>
<dbReference type="STRING" id="387344.LVIS_0935"/>
<dbReference type="KEGG" id="lbr:LVIS_0935"/>
<dbReference type="eggNOG" id="COG0332">
    <property type="taxonomic scope" value="Bacteria"/>
</dbReference>
<dbReference type="HOGENOM" id="CLU_039592_4_1_9"/>
<dbReference type="UniPathway" id="UPA00094"/>
<dbReference type="Proteomes" id="UP000001652">
    <property type="component" value="Chromosome"/>
</dbReference>
<dbReference type="GO" id="GO:0005737">
    <property type="term" value="C:cytoplasm"/>
    <property type="evidence" value="ECO:0007669"/>
    <property type="project" value="UniProtKB-SubCell"/>
</dbReference>
<dbReference type="GO" id="GO:0004315">
    <property type="term" value="F:3-oxoacyl-[acyl-carrier-protein] synthase activity"/>
    <property type="evidence" value="ECO:0007669"/>
    <property type="project" value="InterPro"/>
</dbReference>
<dbReference type="GO" id="GO:0033818">
    <property type="term" value="F:beta-ketoacyl-acyl-carrier-protein synthase III activity"/>
    <property type="evidence" value="ECO:0007669"/>
    <property type="project" value="UniProtKB-UniRule"/>
</dbReference>
<dbReference type="GO" id="GO:0006633">
    <property type="term" value="P:fatty acid biosynthetic process"/>
    <property type="evidence" value="ECO:0007669"/>
    <property type="project" value="UniProtKB-UniRule"/>
</dbReference>
<dbReference type="GO" id="GO:0044550">
    <property type="term" value="P:secondary metabolite biosynthetic process"/>
    <property type="evidence" value="ECO:0007669"/>
    <property type="project" value="TreeGrafter"/>
</dbReference>
<dbReference type="CDD" id="cd00830">
    <property type="entry name" value="KAS_III"/>
    <property type="match status" value="1"/>
</dbReference>
<dbReference type="Gene3D" id="3.40.47.10">
    <property type="match status" value="1"/>
</dbReference>
<dbReference type="HAMAP" id="MF_01815">
    <property type="entry name" value="FabH"/>
    <property type="match status" value="1"/>
</dbReference>
<dbReference type="InterPro" id="IPR013747">
    <property type="entry name" value="ACP_syn_III_C"/>
</dbReference>
<dbReference type="InterPro" id="IPR013751">
    <property type="entry name" value="ACP_syn_III_N"/>
</dbReference>
<dbReference type="InterPro" id="IPR004655">
    <property type="entry name" value="FabH"/>
</dbReference>
<dbReference type="InterPro" id="IPR016039">
    <property type="entry name" value="Thiolase-like"/>
</dbReference>
<dbReference type="NCBIfam" id="TIGR00747">
    <property type="entry name" value="fabH"/>
    <property type="match status" value="1"/>
</dbReference>
<dbReference type="NCBIfam" id="NF006829">
    <property type="entry name" value="PRK09352.1"/>
    <property type="match status" value="1"/>
</dbReference>
<dbReference type="PANTHER" id="PTHR34069">
    <property type="entry name" value="3-OXOACYL-[ACYL-CARRIER-PROTEIN] SYNTHASE 3"/>
    <property type="match status" value="1"/>
</dbReference>
<dbReference type="PANTHER" id="PTHR34069:SF2">
    <property type="entry name" value="BETA-KETOACYL-[ACYL-CARRIER-PROTEIN] SYNTHASE III"/>
    <property type="match status" value="1"/>
</dbReference>
<dbReference type="Pfam" id="PF08545">
    <property type="entry name" value="ACP_syn_III"/>
    <property type="match status" value="1"/>
</dbReference>
<dbReference type="Pfam" id="PF08541">
    <property type="entry name" value="ACP_syn_III_C"/>
    <property type="match status" value="1"/>
</dbReference>
<dbReference type="SUPFAM" id="SSF53901">
    <property type="entry name" value="Thiolase-like"/>
    <property type="match status" value="1"/>
</dbReference>
<feature type="chain" id="PRO_1000070234" description="Beta-ketoacyl-[acyl-carrier-protein] synthase III">
    <location>
        <begin position="1"/>
        <end position="327"/>
    </location>
</feature>
<feature type="region of interest" description="ACP-binding" evidence="1">
    <location>
        <begin position="255"/>
        <end position="259"/>
    </location>
</feature>
<feature type="active site" evidence="1">
    <location>
        <position position="114"/>
    </location>
</feature>
<feature type="active site" evidence="1">
    <location>
        <position position="254"/>
    </location>
</feature>
<feature type="active site" evidence="1">
    <location>
        <position position="284"/>
    </location>
</feature>
<accession>Q03RV2</accession>
<organism>
    <name type="scientific">Levilactobacillus brevis (strain ATCC 367 / BCRC 12310 / CIP 105137 / JCM 1170 / LMG 11437 / NCIMB 947 / NCTC 947)</name>
    <name type="common">Lactobacillus brevis</name>
    <dbReference type="NCBI Taxonomy" id="387344"/>
    <lineage>
        <taxon>Bacteria</taxon>
        <taxon>Bacillati</taxon>
        <taxon>Bacillota</taxon>
        <taxon>Bacilli</taxon>
        <taxon>Lactobacillales</taxon>
        <taxon>Lactobacillaceae</taxon>
        <taxon>Levilactobacillus</taxon>
    </lineage>
</organism>
<proteinExistence type="inferred from homology"/>
<sequence length="327" mass="35281">MKFENFNILATAGYTPERVVPNSELTTMMTTSDEWIVQRTGIHQRHVVTAERTSDLCTRVAQQLLQRSGLQATDIDYIVVATMSPDYQTPAVSAQVQGNIGATKAVALDVNAACSGFVYGLQVVHRLLMGDSPKTALLIGGETLSRLVDWQDRSTAVLFGDGAGGVVLTSALAQDGAFIAADYRTMGEQGRYLTAGANGVDSPFASDPQPVLPFFKMNGRRVYNFAIKQVPASLRRVLDQGHLAVTDVDYFILHQANQRIIERIAEDLTGSMAQFPVNIGQYGNTAAASEPLLLNQLVTSHVIKRGDVLALSGFGGGLTIGTMILRY</sequence>
<name>FABH_LEVBA</name>